<dbReference type="EC" id="2.7.13.3"/>
<dbReference type="EMBL" id="AJ938182">
    <property type="protein sequence ID" value="CAI80959.1"/>
    <property type="molecule type" value="Genomic_DNA"/>
</dbReference>
<dbReference type="RefSeq" id="WP_000166788.1">
    <property type="nucleotide sequence ID" value="NC_007622.1"/>
</dbReference>
<dbReference type="SMR" id="Q2YY04"/>
<dbReference type="KEGG" id="sab:SAB1270c"/>
<dbReference type="HOGENOM" id="CLU_000445_89_6_9"/>
<dbReference type="GO" id="GO:0005886">
    <property type="term" value="C:plasma membrane"/>
    <property type="evidence" value="ECO:0007669"/>
    <property type="project" value="UniProtKB-SubCell"/>
</dbReference>
<dbReference type="GO" id="GO:0005524">
    <property type="term" value="F:ATP binding"/>
    <property type="evidence" value="ECO:0007669"/>
    <property type="project" value="UniProtKB-KW"/>
</dbReference>
<dbReference type="GO" id="GO:0000155">
    <property type="term" value="F:phosphorelay sensor kinase activity"/>
    <property type="evidence" value="ECO:0007669"/>
    <property type="project" value="InterPro"/>
</dbReference>
<dbReference type="CDD" id="cd00075">
    <property type="entry name" value="HATPase"/>
    <property type="match status" value="1"/>
</dbReference>
<dbReference type="CDD" id="cd00082">
    <property type="entry name" value="HisKA"/>
    <property type="match status" value="1"/>
</dbReference>
<dbReference type="FunFam" id="3.30.565.10:FF:000006">
    <property type="entry name" value="Sensor histidine kinase WalK"/>
    <property type="match status" value="1"/>
</dbReference>
<dbReference type="FunFam" id="1.10.287.130:FF:000001">
    <property type="entry name" value="Two-component sensor histidine kinase"/>
    <property type="match status" value="1"/>
</dbReference>
<dbReference type="Gene3D" id="1.10.287.130">
    <property type="match status" value="1"/>
</dbReference>
<dbReference type="Gene3D" id="6.10.340.10">
    <property type="match status" value="1"/>
</dbReference>
<dbReference type="Gene3D" id="3.30.565.10">
    <property type="entry name" value="Histidine kinase-like ATPase, C-terminal domain"/>
    <property type="match status" value="1"/>
</dbReference>
<dbReference type="InterPro" id="IPR041610">
    <property type="entry name" value="ArlS_N"/>
</dbReference>
<dbReference type="InterPro" id="IPR050398">
    <property type="entry name" value="Bact_Sensor_His_Kinase"/>
</dbReference>
<dbReference type="InterPro" id="IPR003660">
    <property type="entry name" value="HAMP_dom"/>
</dbReference>
<dbReference type="InterPro" id="IPR036890">
    <property type="entry name" value="HATPase_C_sf"/>
</dbReference>
<dbReference type="InterPro" id="IPR005467">
    <property type="entry name" value="His_kinase_dom"/>
</dbReference>
<dbReference type="InterPro" id="IPR003661">
    <property type="entry name" value="HisK_dim/P_dom"/>
</dbReference>
<dbReference type="InterPro" id="IPR036097">
    <property type="entry name" value="HisK_dim/P_sf"/>
</dbReference>
<dbReference type="InterPro" id="IPR004358">
    <property type="entry name" value="Sig_transdc_His_kin-like_C"/>
</dbReference>
<dbReference type="PANTHER" id="PTHR45528:SF12">
    <property type="entry name" value="SENSOR HISTIDINE KINASE ARSS"/>
    <property type="match status" value="1"/>
</dbReference>
<dbReference type="PANTHER" id="PTHR45528">
    <property type="entry name" value="SENSOR HISTIDINE KINASE CPXA"/>
    <property type="match status" value="1"/>
</dbReference>
<dbReference type="Pfam" id="PF18719">
    <property type="entry name" value="ArlS_N"/>
    <property type="match status" value="1"/>
</dbReference>
<dbReference type="Pfam" id="PF02518">
    <property type="entry name" value="HATPase_c"/>
    <property type="match status" value="1"/>
</dbReference>
<dbReference type="Pfam" id="PF00512">
    <property type="entry name" value="HisKA"/>
    <property type="match status" value="1"/>
</dbReference>
<dbReference type="PRINTS" id="PR00344">
    <property type="entry name" value="BCTRLSENSOR"/>
</dbReference>
<dbReference type="SMART" id="SM00387">
    <property type="entry name" value="HATPase_c"/>
    <property type="match status" value="1"/>
</dbReference>
<dbReference type="SMART" id="SM00388">
    <property type="entry name" value="HisKA"/>
    <property type="match status" value="1"/>
</dbReference>
<dbReference type="SUPFAM" id="SSF55874">
    <property type="entry name" value="ATPase domain of HSP90 chaperone/DNA topoisomerase II/histidine kinase"/>
    <property type="match status" value="1"/>
</dbReference>
<dbReference type="SUPFAM" id="SSF158472">
    <property type="entry name" value="HAMP domain-like"/>
    <property type="match status" value="1"/>
</dbReference>
<dbReference type="SUPFAM" id="SSF47384">
    <property type="entry name" value="Homodimeric domain of signal transducing histidine kinase"/>
    <property type="match status" value="1"/>
</dbReference>
<dbReference type="PROSITE" id="PS50885">
    <property type="entry name" value="HAMP"/>
    <property type="match status" value="1"/>
</dbReference>
<dbReference type="PROSITE" id="PS50109">
    <property type="entry name" value="HIS_KIN"/>
    <property type="match status" value="1"/>
</dbReference>
<reference key="1">
    <citation type="journal article" date="2007" name="PLoS ONE">
        <title>Molecular correlates of host specialization in Staphylococcus aureus.</title>
        <authorList>
            <person name="Herron-Olson L."/>
            <person name="Fitzgerald J.R."/>
            <person name="Musser J.M."/>
            <person name="Kapur V."/>
        </authorList>
    </citation>
    <scope>NUCLEOTIDE SEQUENCE [LARGE SCALE GENOMIC DNA]</scope>
    <source>
        <strain>bovine RF122 / ET3-1</strain>
    </source>
</reference>
<gene>
    <name type="primary">arlS</name>
    <name type="ordered locus">SAB1270c</name>
</gene>
<evidence type="ECO:0000250" key="1"/>
<evidence type="ECO:0000255" key="2"/>
<evidence type="ECO:0000255" key="3">
    <source>
        <dbReference type="PROSITE-ProRule" id="PRU00102"/>
    </source>
</evidence>
<evidence type="ECO:0000255" key="4">
    <source>
        <dbReference type="PROSITE-ProRule" id="PRU00107"/>
    </source>
</evidence>
<protein>
    <recommendedName>
        <fullName>Signal transduction histidine-protein kinase ArlS</fullName>
        <ecNumber>2.7.13.3</ecNumber>
    </recommendedName>
</protein>
<proteinExistence type="inferred from homology"/>
<feature type="chain" id="PRO_0000293447" description="Signal transduction histidine-protein kinase ArlS">
    <location>
        <begin position="1"/>
        <end position="451"/>
    </location>
</feature>
<feature type="transmembrane region" description="Helical" evidence="2">
    <location>
        <begin position="11"/>
        <end position="31"/>
    </location>
</feature>
<feature type="transmembrane region" description="Helical" evidence="2">
    <location>
        <begin position="156"/>
        <end position="176"/>
    </location>
</feature>
<feature type="domain" description="HAMP" evidence="3">
    <location>
        <begin position="178"/>
        <end position="231"/>
    </location>
</feature>
<feature type="domain" description="Histidine kinase" evidence="4">
    <location>
        <begin position="239"/>
        <end position="451"/>
    </location>
</feature>
<feature type="modified residue" description="Phosphohistidine; by autocatalysis" evidence="4">
    <location>
        <position position="242"/>
    </location>
</feature>
<comment type="function">
    <text evidence="1">Member of the two-component regulatory system ArlS/ArlR involved in the regulation of adhesion, autolysis, multidrug resistance and virulence. ArlS probably functions as a sensor protein kinase which is autophosphorylated at a histidine residue and transfers its phosphate group to ArlR (By similarity).</text>
</comment>
<comment type="catalytic activity">
    <reaction>
        <text>ATP + protein L-histidine = ADP + protein N-phospho-L-histidine.</text>
        <dbReference type="EC" id="2.7.13.3"/>
    </reaction>
</comment>
<comment type="subcellular location">
    <subcellularLocation>
        <location evidence="1">Cell membrane</location>
        <topology evidence="1">Multi-pass membrane protein</topology>
    </subcellularLocation>
</comment>
<comment type="PTM">
    <text evidence="1">Autophosphorylated.</text>
</comment>
<keyword id="KW-0067">ATP-binding</keyword>
<keyword id="KW-1003">Cell membrane</keyword>
<keyword id="KW-0418">Kinase</keyword>
<keyword id="KW-0472">Membrane</keyword>
<keyword id="KW-0547">Nucleotide-binding</keyword>
<keyword id="KW-0597">Phosphoprotein</keyword>
<keyword id="KW-0808">Transferase</keyword>
<keyword id="KW-0812">Transmembrane</keyword>
<keyword id="KW-1133">Transmembrane helix</keyword>
<keyword id="KW-0902">Two-component regulatory system</keyword>
<keyword id="KW-0843">Virulence</keyword>
<organism>
    <name type="scientific">Staphylococcus aureus (strain bovine RF122 / ET3-1)</name>
    <dbReference type="NCBI Taxonomy" id="273036"/>
    <lineage>
        <taxon>Bacteria</taxon>
        <taxon>Bacillati</taxon>
        <taxon>Bacillota</taxon>
        <taxon>Bacilli</taxon>
        <taxon>Bacillales</taxon>
        <taxon>Staphylococcaceae</taxon>
        <taxon>Staphylococcus</taxon>
    </lineage>
</organism>
<accession>Q2YY04</accession>
<sequence>MTKRKLHNNWIIVTTMITFVTIFLFCLIIIFFLKDTLHNSELDDAERSSSDINNLFHSKPVKDISALDLNASLGNFQEIIIYDEHNNKLFETSNDNTVRVEPGYEHRYFDRVIKKRYKGIDYLIIKEPITTQDFKGYSLLIHSLENYDNIVKSLYIIALAFGVIATIITATISYVFSTQITKPLVSLSNKMIEIRRDGFQNKLQLNTNYEEIDNLANTFNEMMSQIEESFNQQRQFVEDASHELRTPLQIIQGHLNLIQRWGKKDPAVLEESLNISIEEMNRIIKLVEELLELTKGDVNDISSEAQTVHINDEIRSRIHSLKQLHPDYQFDTDLTSKNLEIKMKPHQFEQLFLIFIDNAIKYDVKNKKIKVKTRLKNKQKIIEITDHGIGIPEEDQDFIFDRFYRVDKSRSRSQGGNGLGLSIAQKIIQLNGGSIKIKSEINKGTTFKIIF</sequence>
<name>ARLS_STAAB</name>